<feature type="chain" id="PRO_0000197460" description="Glutathione synthetase">
    <location>
        <begin position="1"/>
        <end position="320"/>
    </location>
</feature>
<feature type="domain" description="ATP-grasp" evidence="2">
    <location>
        <begin position="130"/>
        <end position="315"/>
    </location>
</feature>
<feature type="binding site" evidence="2">
    <location>
        <begin position="156"/>
        <end position="212"/>
    </location>
    <ligand>
        <name>ATP</name>
        <dbReference type="ChEBI" id="CHEBI:30616"/>
    </ligand>
</feature>
<feature type="binding site" evidence="2">
    <location>
        <position position="286"/>
    </location>
    <ligand>
        <name>Mg(2+)</name>
        <dbReference type="ChEBI" id="CHEBI:18420"/>
    </ligand>
</feature>
<feature type="binding site" evidence="2">
    <location>
        <position position="288"/>
    </location>
    <ligand>
        <name>Mg(2+)</name>
        <dbReference type="ChEBI" id="CHEBI:18420"/>
    </ligand>
</feature>
<reference key="1">
    <citation type="journal article" date="2002" name="Science">
        <title>50 million years of genomic stasis in endosymbiotic bacteria.</title>
        <authorList>
            <person name="Tamas I."/>
            <person name="Klasson L."/>
            <person name="Canbaeck B."/>
            <person name="Naeslund A.K."/>
            <person name="Eriksson A.-S."/>
            <person name="Wernegreen J.J."/>
            <person name="Sandstroem J.P."/>
            <person name="Moran N.A."/>
            <person name="Andersson S.G.E."/>
        </authorList>
    </citation>
    <scope>NUCLEOTIDE SEQUENCE [LARGE SCALE GENOMIC DNA]</scope>
    <source>
        <strain>Sg</strain>
    </source>
</reference>
<accession>Q8K931</accession>
<protein>
    <recommendedName>
        <fullName evidence="2">Glutathione synthetase</fullName>
        <ecNumber evidence="2">6.3.2.3</ecNumber>
    </recommendedName>
    <alternativeName>
        <fullName evidence="2">GSH synthetase</fullName>
        <shortName evidence="2">GSH-S</shortName>
        <shortName evidence="2">GSHase</shortName>
    </alternativeName>
    <alternativeName>
        <fullName evidence="2">Glutathione synthase</fullName>
    </alternativeName>
</protein>
<evidence type="ECO:0000250" key="1"/>
<evidence type="ECO:0000255" key="2">
    <source>
        <dbReference type="HAMAP-Rule" id="MF_00162"/>
    </source>
</evidence>
<dbReference type="EC" id="6.3.2.3" evidence="2"/>
<dbReference type="EMBL" id="AE013218">
    <property type="protein sequence ID" value="AAM68070.1"/>
    <property type="molecule type" value="Genomic_DNA"/>
</dbReference>
<dbReference type="RefSeq" id="WP_011054036.1">
    <property type="nucleotide sequence ID" value="NC_004061.1"/>
</dbReference>
<dbReference type="SMR" id="Q8K931"/>
<dbReference type="STRING" id="198804.BUsg_529"/>
<dbReference type="GeneID" id="93004004"/>
<dbReference type="KEGG" id="bas:BUsg_529"/>
<dbReference type="eggNOG" id="COG0189">
    <property type="taxonomic scope" value="Bacteria"/>
</dbReference>
<dbReference type="HOGENOM" id="CLU_068239_0_0_6"/>
<dbReference type="UniPathway" id="UPA00142">
    <property type="reaction ID" value="UER00210"/>
</dbReference>
<dbReference type="Proteomes" id="UP000000416">
    <property type="component" value="Chromosome"/>
</dbReference>
<dbReference type="GO" id="GO:0005737">
    <property type="term" value="C:cytoplasm"/>
    <property type="evidence" value="ECO:0007669"/>
    <property type="project" value="TreeGrafter"/>
</dbReference>
<dbReference type="GO" id="GO:0005524">
    <property type="term" value="F:ATP binding"/>
    <property type="evidence" value="ECO:0007669"/>
    <property type="project" value="UniProtKB-UniRule"/>
</dbReference>
<dbReference type="GO" id="GO:0004363">
    <property type="term" value="F:glutathione synthase activity"/>
    <property type="evidence" value="ECO:0007669"/>
    <property type="project" value="UniProtKB-UniRule"/>
</dbReference>
<dbReference type="GO" id="GO:0046872">
    <property type="term" value="F:metal ion binding"/>
    <property type="evidence" value="ECO:0007669"/>
    <property type="project" value="UniProtKB-KW"/>
</dbReference>
<dbReference type="FunFam" id="3.30.1490.20:FF:000009">
    <property type="entry name" value="Glutathione synthetase"/>
    <property type="match status" value="1"/>
</dbReference>
<dbReference type="FunFam" id="3.40.50.20:FF:000009">
    <property type="entry name" value="Glutathione synthetase"/>
    <property type="match status" value="1"/>
</dbReference>
<dbReference type="Gene3D" id="3.40.50.20">
    <property type="match status" value="1"/>
</dbReference>
<dbReference type="Gene3D" id="3.30.1490.20">
    <property type="entry name" value="ATP-grasp fold, A domain"/>
    <property type="match status" value="1"/>
</dbReference>
<dbReference type="Gene3D" id="3.30.470.20">
    <property type="entry name" value="ATP-grasp fold, B domain"/>
    <property type="match status" value="1"/>
</dbReference>
<dbReference type="HAMAP" id="MF_00162">
    <property type="entry name" value="GSH_S"/>
    <property type="match status" value="1"/>
</dbReference>
<dbReference type="InterPro" id="IPR011761">
    <property type="entry name" value="ATP-grasp"/>
</dbReference>
<dbReference type="InterPro" id="IPR013815">
    <property type="entry name" value="ATP_grasp_subdomain_1"/>
</dbReference>
<dbReference type="InterPro" id="IPR006284">
    <property type="entry name" value="Glut_synth_pro"/>
</dbReference>
<dbReference type="InterPro" id="IPR004218">
    <property type="entry name" value="GSHS_ATP-bd"/>
</dbReference>
<dbReference type="InterPro" id="IPR004215">
    <property type="entry name" value="GSHS_N"/>
</dbReference>
<dbReference type="InterPro" id="IPR016185">
    <property type="entry name" value="PreATP-grasp_dom_sf"/>
</dbReference>
<dbReference type="NCBIfam" id="TIGR01380">
    <property type="entry name" value="glut_syn"/>
    <property type="match status" value="1"/>
</dbReference>
<dbReference type="NCBIfam" id="NF003573">
    <property type="entry name" value="PRK05246.1"/>
    <property type="match status" value="1"/>
</dbReference>
<dbReference type="PANTHER" id="PTHR21621:SF4">
    <property type="entry name" value="GLUTATHIONE SYNTHETASE"/>
    <property type="match status" value="1"/>
</dbReference>
<dbReference type="PANTHER" id="PTHR21621">
    <property type="entry name" value="RIBOSOMAL PROTEIN S6 MODIFICATION PROTEIN"/>
    <property type="match status" value="1"/>
</dbReference>
<dbReference type="Pfam" id="PF02955">
    <property type="entry name" value="GSH-S_ATP"/>
    <property type="match status" value="1"/>
</dbReference>
<dbReference type="Pfam" id="PF02951">
    <property type="entry name" value="GSH-S_N"/>
    <property type="match status" value="1"/>
</dbReference>
<dbReference type="SUPFAM" id="SSF56059">
    <property type="entry name" value="Glutathione synthetase ATP-binding domain-like"/>
    <property type="match status" value="1"/>
</dbReference>
<dbReference type="SUPFAM" id="SSF52440">
    <property type="entry name" value="PreATP-grasp domain"/>
    <property type="match status" value="1"/>
</dbReference>
<dbReference type="PROSITE" id="PS50975">
    <property type="entry name" value="ATP_GRASP"/>
    <property type="match status" value="1"/>
</dbReference>
<sequence>MRKKKNLKIGIVMDSITLINIKKDSSFAILLEAQKRQHEIYYMEMNDLYLRKGQSYATTKSIEIQKNQNNYFKFIQKKDISLNELDAILMRKDPPFNTEFIYATYILERAEEKGVLVINKPKSLRDCNEKIFISWFSRFTTDTLVTRKLSKIHNFWKEKNDIILKPLDAMGGKGVFRIKKDDPNFSVIVETLTNYEKKYCMIQTYLPEVQFGDKRILIVNGKPIPWSLTRIPKHGETRANLAVGGEGRVQKLNDKDWEIANYLAPILKKRGLILVGLDVIGDKLTEINVTSPTCICEIEEKKNISITGILIDYIEDKIYK</sequence>
<organism>
    <name type="scientific">Buchnera aphidicola subsp. Schizaphis graminum (strain Sg)</name>
    <dbReference type="NCBI Taxonomy" id="198804"/>
    <lineage>
        <taxon>Bacteria</taxon>
        <taxon>Pseudomonadati</taxon>
        <taxon>Pseudomonadota</taxon>
        <taxon>Gammaproteobacteria</taxon>
        <taxon>Enterobacterales</taxon>
        <taxon>Erwiniaceae</taxon>
        <taxon>Buchnera</taxon>
    </lineage>
</organism>
<keyword id="KW-0067">ATP-binding</keyword>
<keyword id="KW-0317">Glutathione biosynthesis</keyword>
<keyword id="KW-0436">Ligase</keyword>
<keyword id="KW-0460">Magnesium</keyword>
<keyword id="KW-0464">Manganese</keyword>
<keyword id="KW-0479">Metal-binding</keyword>
<keyword id="KW-0547">Nucleotide-binding</keyword>
<name>GSHB_BUCAP</name>
<proteinExistence type="inferred from homology"/>
<gene>
    <name evidence="2" type="primary">gshB</name>
    <name type="ordered locus">BUsg_529</name>
</gene>
<comment type="catalytic activity">
    <reaction evidence="2">
        <text>gamma-L-glutamyl-L-cysteine + glycine + ATP = glutathione + ADP + phosphate + H(+)</text>
        <dbReference type="Rhea" id="RHEA:13557"/>
        <dbReference type="ChEBI" id="CHEBI:15378"/>
        <dbReference type="ChEBI" id="CHEBI:30616"/>
        <dbReference type="ChEBI" id="CHEBI:43474"/>
        <dbReference type="ChEBI" id="CHEBI:57305"/>
        <dbReference type="ChEBI" id="CHEBI:57925"/>
        <dbReference type="ChEBI" id="CHEBI:58173"/>
        <dbReference type="ChEBI" id="CHEBI:456216"/>
        <dbReference type="EC" id="6.3.2.3"/>
    </reaction>
</comment>
<comment type="cofactor">
    <cofactor evidence="1">
        <name>Mg(2+)</name>
        <dbReference type="ChEBI" id="CHEBI:18420"/>
    </cofactor>
    <cofactor evidence="1">
        <name>Mn(2+)</name>
        <dbReference type="ChEBI" id="CHEBI:29035"/>
    </cofactor>
    <text evidence="1">Binds 1 Mg(2+) or Mn(2+) ion per subunit.</text>
</comment>
<comment type="pathway">
    <text evidence="2">Sulfur metabolism; glutathione biosynthesis; glutathione from L-cysteine and L-glutamate: step 2/2.</text>
</comment>
<comment type="similarity">
    <text evidence="2">Belongs to the prokaryotic GSH synthase family.</text>
</comment>